<comment type="function">
    <text evidence="2 3">Mediates the rate-limiting, proton-dependent, lysosomal efflux of lysophospholipids. Selective for zwitterionic headgroups such as lysophosphatidylcholine (LPC) and lysophosphatidylethanolamine (LPE) (By similarity). Essential player in lysosomal homeostasis (By similarity).</text>
</comment>
<comment type="catalytic activity">
    <reaction evidence="3">
        <text>a 1-acyl-sn-glycero-3-phosphocholine(out) + H(+)(out) = a 1-acyl-sn-glycero-3-phosphocholine(in) + H(+)(in)</text>
        <dbReference type="Rhea" id="RHEA:74435"/>
        <dbReference type="ChEBI" id="CHEBI:15378"/>
        <dbReference type="ChEBI" id="CHEBI:58168"/>
    </reaction>
</comment>
<comment type="catalytic activity">
    <reaction evidence="3">
        <text>a 1-acyl-sn-glycero-3-phosphoethanolamine(out) + H(+)(out) = a 1-acyl-sn-glycero-3-phosphoethanolamine(in) + H(+)(in)</text>
        <dbReference type="Rhea" id="RHEA:74439"/>
        <dbReference type="ChEBI" id="CHEBI:15378"/>
        <dbReference type="ChEBI" id="CHEBI:64381"/>
    </reaction>
</comment>
<comment type="catalytic activity">
    <reaction evidence="3">
        <text>a 1-O-(1Z-alkenyl)-sn-glycero-3-phosphocholine(out) + H(+)(out) = a 1-O-(1Z-alkenyl)-sn-glycero-3-phosphocholine(in) + H(+)(in)</text>
        <dbReference type="Rhea" id="RHEA:74447"/>
        <dbReference type="ChEBI" id="CHEBI:15378"/>
        <dbReference type="ChEBI" id="CHEBI:77287"/>
    </reaction>
</comment>
<comment type="catalytic activity">
    <reaction evidence="3">
        <text>a 1-O-(1Z-alkenyl)-sn-glycero-3-phosphoethanolamine(out) + H(+)(out) = a 1-O-(1Z-alkenyl)-sn-glycero-3-phosphoethanolamine(in) + H(+)(in)</text>
        <dbReference type="Rhea" id="RHEA:74455"/>
        <dbReference type="ChEBI" id="CHEBI:15378"/>
        <dbReference type="ChEBI" id="CHEBI:77288"/>
    </reaction>
</comment>
<comment type="subcellular location">
    <subcellularLocation>
        <location evidence="1">Lysosome membrane</location>
        <topology evidence="1">Multi-pass membrane protein</topology>
    </subcellularLocation>
</comment>
<comment type="similarity">
    <text evidence="6">Belongs to the major facilitator superfamily. Spinster (TC 2.A.1.49) family.</text>
</comment>
<name>SPNS1_XENLA</name>
<gene>
    <name type="primary">spns1</name>
</gene>
<reference key="1">
    <citation type="submission" date="2004-10" db="EMBL/GenBank/DDBJ databases">
        <authorList>
            <consortium name="NIH - Xenopus Gene Collection (XGC) project"/>
        </authorList>
    </citation>
    <scope>NUCLEOTIDE SEQUENCE [LARGE SCALE MRNA]</scope>
    <source>
        <tissue>Embryo</tissue>
    </source>
</reference>
<feature type="chain" id="PRO_0000305042" description="Protein spinster homolog 1">
    <location>
        <begin position="1"/>
        <end position="526"/>
    </location>
</feature>
<feature type="transmembrane region" description="Helical" evidence="4">
    <location>
        <begin position="59"/>
        <end position="79"/>
    </location>
</feature>
<feature type="transmembrane region" description="Helical" evidence="4">
    <location>
        <begin position="98"/>
        <end position="118"/>
    </location>
</feature>
<feature type="transmembrane region" description="Helical" evidence="4">
    <location>
        <begin position="126"/>
        <end position="146"/>
    </location>
</feature>
<feature type="transmembrane region" description="Helical" evidence="4">
    <location>
        <begin position="159"/>
        <end position="179"/>
    </location>
</feature>
<feature type="transmembrane region" description="Helical" evidence="4">
    <location>
        <begin position="187"/>
        <end position="207"/>
    </location>
</feature>
<feature type="transmembrane region" description="Helical" evidence="4">
    <location>
        <begin position="218"/>
        <end position="238"/>
    </location>
</feature>
<feature type="transmembrane region" description="Helical" evidence="4">
    <location>
        <begin position="272"/>
        <end position="292"/>
    </location>
</feature>
<feature type="transmembrane region" description="Helical" evidence="4">
    <location>
        <begin position="321"/>
        <end position="341"/>
    </location>
</feature>
<feature type="transmembrane region" description="Helical" evidence="4">
    <location>
        <begin position="355"/>
        <end position="375"/>
    </location>
</feature>
<feature type="transmembrane region" description="Helical" evidence="4">
    <location>
        <begin position="384"/>
        <end position="404"/>
    </location>
</feature>
<feature type="transmembrane region" description="Helical" evidence="4">
    <location>
        <begin position="419"/>
        <end position="439"/>
    </location>
</feature>
<feature type="transmembrane region" description="Helical" evidence="4">
    <location>
        <begin position="463"/>
        <end position="483"/>
    </location>
</feature>
<feature type="region of interest" description="Disordered" evidence="5">
    <location>
        <begin position="1"/>
        <end position="44"/>
    </location>
</feature>
<evidence type="ECO:0000250" key="1"/>
<evidence type="ECO:0000250" key="2">
    <source>
        <dbReference type="UniProtKB" id="Q7ZU13"/>
    </source>
</evidence>
<evidence type="ECO:0000250" key="3">
    <source>
        <dbReference type="UniProtKB" id="Q9H2V7"/>
    </source>
</evidence>
<evidence type="ECO:0000255" key="4"/>
<evidence type="ECO:0000256" key="5">
    <source>
        <dbReference type="SAM" id="MobiDB-lite"/>
    </source>
</evidence>
<evidence type="ECO:0000305" key="6"/>
<accession>Q5XGK0</accession>
<organism>
    <name type="scientific">Xenopus laevis</name>
    <name type="common">African clawed frog</name>
    <dbReference type="NCBI Taxonomy" id="8355"/>
    <lineage>
        <taxon>Eukaryota</taxon>
        <taxon>Metazoa</taxon>
        <taxon>Chordata</taxon>
        <taxon>Craniata</taxon>
        <taxon>Vertebrata</taxon>
        <taxon>Euteleostomi</taxon>
        <taxon>Amphibia</taxon>
        <taxon>Batrachia</taxon>
        <taxon>Anura</taxon>
        <taxon>Pipoidea</taxon>
        <taxon>Pipidae</taxon>
        <taxon>Xenopodinae</taxon>
        <taxon>Xenopus</taxon>
        <taxon>Xenopus</taxon>
    </lineage>
</organism>
<sequence>MTSRRSHGDVTPFLTQADNTEEEGVRDPESQSSDEEEEEGKDHGKETHLLTGISYKRSVIIVIILFYINLLNYMDRFTVAGVLPDIKKAFNISDSNSGLVQTVFICSYMFLAPVFGYLGDRYNRKLIMCVGISFWSLVTLLSSFVSNQYFWLFLITRGLVGVGEASYSTIAPTIIADLFLADQRTRMLSFFYFATPVGCGLGYIVGSEMTSAAGDWHWALRVTPGLGLLAVLLLIFVAEEPPRGALERKTDRPLTNTSWSSDMKALLKNPSFILSTFGFTTVAFVTGALALWGPTYLMRSRMVIYKSKPCEGGICNYDDSMIFGGITCITGILGVLTGVEISKRYRKTNPRADPLVCAVGMISSAPFLFLSLAFADTSLVATYVFIFIGETLLSLNWALVADILLYVVIPTRRSTAEALQIVVSHLLGDAGSPYLIGVISDQIQKGKPASFLIQMRSLEYALMICAFVGVIGGGFFLTTALFIEKDRKKAELFSQGLLPADETDAERIVVPKRGRSTKVPVSSVLI</sequence>
<proteinExistence type="evidence at transcript level"/>
<protein>
    <recommendedName>
        <fullName>Protein spinster homolog 1</fullName>
    </recommendedName>
    <alternativeName>
        <fullName>Spns1</fullName>
    </alternativeName>
</protein>
<dbReference type="EMBL" id="BC084438">
    <property type="protein sequence ID" value="AAH84438.1"/>
    <property type="molecule type" value="mRNA"/>
</dbReference>
<dbReference type="RefSeq" id="NP_001088358.1">
    <property type="nucleotide sequence ID" value="NM_001094889.1"/>
</dbReference>
<dbReference type="SMR" id="Q5XGK0"/>
<dbReference type="DNASU" id="495202"/>
<dbReference type="GeneID" id="495202"/>
<dbReference type="KEGG" id="xla:495202"/>
<dbReference type="AGR" id="Xenbase:XB-GENE-959723"/>
<dbReference type="CTD" id="495202"/>
<dbReference type="Xenbase" id="XB-GENE-959723">
    <property type="gene designation" value="spns1.L"/>
</dbReference>
<dbReference type="OrthoDB" id="6770063at2759"/>
<dbReference type="Proteomes" id="UP000186698">
    <property type="component" value="Chromosome 9_10L"/>
</dbReference>
<dbReference type="Bgee" id="495202">
    <property type="expression patterns" value="Expressed in testis and 20 other cell types or tissues"/>
</dbReference>
<dbReference type="GO" id="GO:0005765">
    <property type="term" value="C:lysosomal membrane"/>
    <property type="evidence" value="ECO:0007669"/>
    <property type="project" value="UniProtKB-SubCell"/>
</dbReference>
<dbReference type="GO" id="GO:0016020">
    <property type="term" value="C:membrane"/>
    <property type="evidence" value="ECO:0000318"/>
    <property type="project" value="GO_Central"/>
</dbReference>
<dbReference type="GO" id="GO:0022857">
    <property type="term" value="F:transmembrane transporter activity"/>
    <property type="evidence" value="ECO:0000318"/>
    <property type="project" value="GO_Central"/>
</dbReference>
<dbReference type="GO" id="GO:0006869">
    <property type="term" value="P:lipid transport"/>
    <property type="evidence" value="ECO:0007669"/>
    <property type="project" value="UniProtKB-KW"/>
</dbReference>
<dbReference type="CDD" id="cd17328">
    <property type="entry name" value="MFS_spinster_like"/>
    <property type="match status" value="1"/>
</dbReference>
<dbReference type="Gene3D" id="1.20.1250.20">
    <property type="entry name" value="MFS general substrate transporter like domains"/>
    <property type="match status" value="1"/>
</dbReference>
<dbReference type="InterPro" id="IPR011701">
    <property type="entry name" value="MFS"/>
</dbReference>
<dbReference type="InterPro" id="IPR020846">
    <property type="entry name" value="MFS_dom"/>
</dbReference>
<dbReference type="InterPro" id="IPR044770">
    <property type="entry name" value="MFS_spinster-like"/>
</dbReference>
<dbReference type="InterPro" id="IPR036259">
    <property type="entry name" value="MFS_trans_sf"/>
</dbReference>
<dbReference type="PANTHER" id="PTHR23505:SF13">
    <property type="entry name" value="PROTEIN SPINSTER HOMOLOG 1"/>
    <property type="match status" value="1"/>
</dbReference>
<dbReference type="PANTHER" id="PTHR23505">
    <property type="entry name" value="SPINSTER"/>
    <property type="match status" value="1"/>
</dbReference>
<dbReference type="Pfam" id="PF07690">
    <property type="entry name" value="MFS_1"/>
    <property type="match status" value="1"/>
</dbReference>
<dbReference type="SUPFAM" id="SSF103473">
    <property type="entry name" value="MFS general substrate transporter"/>
    <property type="match status" value="1"/>
</dbReference>
<dbReference type="PROSITE" id="PS50850">
    <property type="entry name" value="MFS"/>
    <property type="match status" value="1"/>
</dbReference>
<keyword id="KW-0445">Lipid transport</keyword>
<keyword id="KW-0458">Lysosome</keyword>
<keyword id="KW-0472">Membrane</keyword>
<keyword id="KW-1185">Reference proteome</keyword>
<keyword id="KW-0812">Transmembrane</keyword>
<keyword id="KW-1133">Transmembrane helix</keyword>
<keyword id="KW-0813">Transport</keyword>